<reference key="1">
    <citation type="journal article" date="1992" name="J. Gen. Virol.">
        <title>Sequence analysis of the Marburg virus nucleoprotein gene: comparison to Ebola virus and other non-segmented negative-strand RNA viruses.</title>
        <authorList>
            <person name="Sanchez A."/>
            <person name="Kiley M.P."/>
            <person name="Klenk H.-D."/>
            <person name="Feldmann H."/>
        </authorList>
    </citation>
    <scope>NUCLEOTIDE SEQUENCE [GENOMIC RNA]</scope>
</reference>
<reference key="2">
    <citation type="submission" date="1994-09" db="EMBL/GenBank/DDBJ databases">
        <authorList>
            <person name="Feldmann H."/>
        </authorList>
    </citation>
    <scope>SEQUENCE REVISION</scope>
</reference>
<reference key="3">
    <citation type="submission" date="2003-10" db="EMBL/GenBank/DDBJ databases">
        <authorList>
            <person name="Chain P.S.G."/>
            <person name="Malfatti S.A."/>
            <person name="Hajjaj A."/>
            <person name="Vergez L.M."/>
            <person name="Do L.H."/>
            <person name="Smith K.L."/>
            <person name="McCready P.M."/>
        </authorList>
    </citation>
    <scope>NUCLEOTIDE SEQUENCE [GENOMIC RNA]</scope>
    <source>
        <strain>pp3/guinea pig lethal</strain>
        <strain>pp4/guinea pig nonlethal</strain>
    </source>
</reference>
<reference key="4">
    <citation type="submission" date="2003-10" db="EMBL/GenBank/DDBJ databases">
        <authorList>
            <person name="Ichou M.A."/>
            <person name="Paragas J."/>
            <person name="Jahrling P.B."/>
            <person name="Ibrahim M.S."/>
            <person name="Lofts L."/>
            <person name="Hevey M."/>
            <person name="Schmaljohn A."/>
        </authorList>
    </citation>
    <scope>NUCLEOTIDE SEQUENCE [GENOMIC RNA]</scope>
    <source>
        <strain>pp3/guinea pig lethal</strain>
        <strain>pp4/guinea pig nonlethal</strain>
    </source>
</reference>
<reference key="5">
    <citation type="journal article" date="2006" name="J. Virol.">
        <title>Rescue of recombinant Marburg virus from cDNA is dependent on nucleocapsid protein VP30.</title>
        <authorList>
            <person name="Enterlein S."/>
            <person name="Volchkov V."/>
            <person name="Weik M."/>
            <person name="Kolesnikova L."/>
            <person name="Volchkova V."/>
            <person name="Klenk H.-D."/>
            <person name="Muehlberger E."/>
        </authorList>
    </citation>
    <scope>NUCLEOTIDE SEQUENCE [GENOMIC RNA]</scope>
    <source>
        <strain>Isolate Enterlein</strain>
    </source>
</reference>
<reference key="6">
    <citation type="journal article" date="1994" name="J. Gen. Virol.">
        <title>The nucleoprotein of Marburg virus is phosphorylated.</title>
        <authorList>
            <person name="Becker S."/>
            <person name="Huppertz S."/>
            <person name="Klenk H.-D."/>
            <person name="Feldmann H."/>
        </authorList>
    </citation>
    <scope>PHOSPHORYLATION</scope>
</reference>
<reference key="7">
    <citation type="journal article" date="2005" name="J. Virol.">
        <title>VP24 of Marburg virus influences formation of infectious particles.</title>
        <authorList>
            <person name="Bamberg S."/>
            <person name="Kolesnikova L."/>
            <person name="Moeller P."/>
            <person name="Klenk H.-D."/>
            <person name="Becker S."/>
        </authorList>
    </citation>
    <scope>INTERACTION WITH VP24</scope>
</reference>
<reference key="8">
    <citation type="journal article" date="2007" name="Virol. J.">
        <title>Nucleocapsid formation and RNA synthesis of Marburg virus is dependent on two coiled coil motifs in the nucleoprotein.</title>
        <authorList>
            <person name="Dicarlo A."/>
            <person name="Moeller P."/>
            <person name="Lander A."/>
            <person name="Kolesnikova L."/>
            <person name="Becker S."/>
        </authorList>
    </citation>
    <scope>INTERACTION WITH VP35</scope>
    <scope>COILED-COIL DOMAIN</scope>
</reference>
<reference key="9">
    <citation type="journal article" date="2010" name="J. Virol.">
        <title>Tsg101 is recruited by a late domain of the nucleocapsid protein to support budding of Marburg virus-like particles.</title>
        <authorList>
            <person name="Dolnik O."/>
            <person name="Kolesnikova L."/>
            <person name="Stevermann L."/>
            <person name="Becker S."/>
        </authorList>
    </citation>
    <scope>LATE-BUDDING DOMAIN</scope>
</reference>
<name>NCAP_MABVM</name>
<feature type="chain" id="PRO_0000222175" description="Nucleoprotein">
    <location>
        <begin position="1"/>
        <end position="695"/>
    </location>
</feature>
<feature type="region of interest" description="Disordered" evidence="3">
    <location>
        <begin position="424"/>
        <end position="611"/>
    </location>
</feature>
<feature type="coiled-coil region" evidence="2">
    <location>
        <begin position="316"/>
        <end position="341"/>
    </location>
</feature>
<feature type="coiled-coil region" evidence="2">
    <location>
        <begin position="372"/>
        <end position="399"/>
    </location>
</feature>
<feature type="short sequence motif" description="PTAP/PSAP motif">
    <location>
        <begin position="603"/>
        <end position="606"/>
    </location>
</feature>
<feature type="compositionally biased region" description="Basic and acidic residues" evidence="3">
    <location>
        <begin position="438"/>
        <end position="447"/>
    </location>
</feature>
<feature type="compositionally biased region" description="Polar residues" evidence="3">
    <location>
        <begin position="495"/>
        <end position="505"/>
    </location>
</feature>
<feature type="compositionally biased region" description="Polar residues" evidence="3">
    <location>
        <begin position="537"/>
        <end position="552"/>
    </location>
</feature>
<feature type="sequence variant" description="In strain: pp3/guinea pig lethal, pp4/guinea pig nonlethal and Isolate Enterlein.">
    <original>V</original>
    <variation>I</variation>
    <location>
        <position position="77"/>
    </location>
</feature>
<feature type="sequence variant" description="In strain: pp3/guinea pig lethal, pp4/guinea pig nonlethal and Isolate Enterlein.">
    <original>S</original>
    <variation>I</variation>
    <location>
        <position position="103"/>
    </location>
</feature>
<feature type="sequence variant" description="In strain: pp3/guinea pig lethal, pp4/guinea pig nonlethal and Isolate Enterlein.">
    <original>R</original>
    <variation>P</variation>
    <location>
        <position position="514"/>
    </location>
</feature>
<feature type="sequence variant" description="In strain: pp4/guinea pig nonlethal.">
    <original>R</original>
    <variation>K</variation>
    <location>
        <position position="611"/>
    </location>
</feature>
<feature type="helix" evidence="9">
    <location>
        <begin position="4"/>
        <end position="7"/>
    </location>
</feature>
<feature type="helix" evidence="9">
    <location>
        <begin position="9"/>
        <end position="11"/>
    </location>
</feature>
<feature type="strand" evidence="9">
    <location>
        <begin position="21"/>
        <end position="26"/>
    </location>
</feature>
<feature type="helix" evidence="9">
    <location>
        <begin position="31"/>
        <end position="43"/>
    </location>
</feature>
<feature type="helix" evidence="9">
    <location>
        <begin position="51"/>
        <end position="65"/>
    </location>
</feature>
<feature type="helix" evidence="9">
    <location>
        <begin position="70"/>
        <end position="73"/>
    </location>
</feature>
<feature type="helix" evidence="9">
    <location>
        <begin position="76"/>
        <end position="84"/>
    </location>
</feature>
<feature type="strand" evidence="9">
    <location>
        <begin position="86"/>
        <end position="91"/>
    </location>
</feature>
<feature type="helix" evidence="9">
    <location>
        <begin position="99"/>
        <end position="102"/>
    </location>
</feature>
<feature type="helix" evidence="9">
    <location>
        <begin position="110"/>
        <end position="116"/>
    </location>
</feature>
<feature type="helix" evidence="9">
    <location>
        <begin position="128"/>
        <end position="137"/>
    </location>
</feature>
<feature type="helix" evidence="9">
    <location>
        <begin position="148"/>
        <end position="163"/>
    </location>
</feature>
<feature type="helix" evidence="9">
    <location>
        <begin position="171"/>
        <end position="174"/>
    </location>
</feature>
<feature type="helix" evidence="9">
    <location>
        <begin position="176"/>
        <end position="188"/>
    </location>
</feature>
<feature type="helix" evidence="9">
    <location>
        <begin position="190"/>
        <end position="202"/>
    </location>
</feature>
<feature type="helix" evidence="9">
    <location>
        <begin position="209"/>
        <end position="221"/>
    </location>
</feature>
<feature type="turn" evidence="9">
    <location>
        <begin position="222"/>
        <end position="225"/>
    </location>
</feature>
<feature type="helix" evidence="9">
    <location>
        <begin position="227"/>
        <end position="235"/>
    </location>
</feature>
<feature type="strand" evidence="9">
    <location>
        <begin position="237"/>
        <end position="240"/>
    </location>
</feature>
<feature type="strand" evidence="9">
    <location>
        <begin position="243"/>
        <end position="246"/>
    </location>
</feature>
<feature type="helix" evidence="9">
    <location>
        <begin position="248"/>
        <end position="250"/>
    </location>
</feature>
<feature type="helix" evidence="9">
    <location>
        <begin position="253"/>
        <end position="270"/>
    </location>
</feature>
<feature type="helix" evidence="9">
    <location>
        <begin position="276"/>
        <end position="278"/>
    </location>
</feature>
<feature type="helix" evidence="9">
    <location>
        <begin position="279"/>
        <end position="282"/>
    </location>
</feature>
<feature type="helix" evidence="9">
    <location>
        <begin position="287"/>
        <end position="290"/>
    </location>
</feature>
<feature type="turn" evidence="9">
    <location>
        <begin position="292"/>
        <end position="294"/>
    </location>
</feature>
<feature type="helix" evidence="9">
    <location>
        <begin position="296"/>
        <end position="309"/>
    </location>
</feature>
<feature type="helix" evidence="9">
    <location>
        <begin position="311"/>
        <end position="315"/>
    </location>
</feature>
<feature type="turn" evidence="9">
    <location>
        <begin position="320"/>
        <end position="322"/>
    </location>
</feature>
<feature type="helix" evidence="9">
    <location>
        <begin position="323"/>
        <end position="348"/>
    </location>
</feature>
<feature type="helix" evidence="9">
    <location>
        <begin position="352"/>
        <end position="389"/>
    </location>
</feature>
<feature type="strand" evidence="8">
    <location>
        <begin position="634"/>
        <end position="637"/>
    </location>
</feature>
<feature type="strand" evidence="8">
    <location>
        <begin position="643"/>
        <end position="646"/>
    </location>
</feature>
<feature type="helix" evidence="8">
    <location>
        <begin position="648"/>
        <end position="650"/>
    </location>
</feature>
<feature type="strand" evidence="8">
    <location>
        <begin position="651"/>
        <end position="654"/>
    </location>
</feature>
<feature type="helix" evidence="8">
    <location>
        <begin position="657"/>
        <end position="665"/>
    </location>
</feature>
<feature type="helix" evidence="8">
    <location>
        <begin position="670"/>
        <end position="679"/>
    </location>
</feature>
<feature type="helix" evidence="8">
    <location>
        <begin position="680"/>
        <end position="682"/>
    </location>
</feature>
<feature type="helix" evidence="8">
    <location>
        <begin position="685"/>
        <end position="694"/>
    </location>
</feature>
<accession>P27588</accession>
<accession>Q38L45</accession>
<accession>Q6T6U3</accession>
<accession>Q6T6V0</accession>
<dbReference type="EMBL" id="M72714">
    <property type="protein sequence ID" value="AAA46563.1"/>
    <property type="molecule type" value="Genomic_RNA"/>
</dbReference>
<dbReference type="EMBL" id="Z12132">
    <property type="protein sequence ID" value="CAA78114.1"/>
    <property type="status" value="ALT_FRAME"/>
    <property type="molecule type" value="Genomic_DNA"/>
</dbReference>
<dbReference type="EMBL" id="AY430365">
    <property type="protein sequence ID" value="AAR85460.1"/>
    <property type="molecule type" value="Genomic_RNA"/>
</dbReference>
<dbReference type="EMBL" id="AY430366">
    <property type="protein sequence ID" value="AAR85453.1"/>
    <property type="molecule type" value="Genomic_RNA"/>
</dbReference>
<dbReference type="EMBL" id="DQ217792">
    <property type="protein sequence ID" value="ABA87124.1"/>
    <property type="molecule type" value="Genomic_RNA"/>
</dbReference>
<dbReference type="PIR" id="JQ1408">
    <property type="entry name" value="VHIWMV"/>
</dbReference>
<dbReference type="RefSeq" id="YP_001531153.1">
    <property type="nucleotide sequence ID" value="NC_001608.3"/>
</dbReference>
<dbReference type="PDB" id="4W2O">
    <property type="method" value="X-ray"/>
    <property type="resolution" value="3.20 A"/>
    <property type="chains" value="B/D/F/H=601-695"/>
</dbReference>
<dbReference type="PDB" id="4W2Q">
    <property type="method" value="X-ray"/>
    <property type="resolution" value="2.70 A"/>
    <property type="chains" value="B/D/F/H=632-695"/>
</dbReference>
<dbReference type="PDB" id="5T3W">
    <property type="method" value="X-ray"/>
    <property type="resolution" value="3.25 A"/>
    <property type="chains" value="A/B/C/D/E/F/G/H=552-579"/>
</dbReference>
<dbReference type="PDB" id="6APP">
    <property type="method" value="X-ray"/>
    <property type="resolution" value="1.75 A"/>
    <property type="chains" value="B=601-695"/>
</dbReference>
<dbReference type="PDB" id="9FVD">
    <property type="method" value="EM"/>
    <property type="resolution" value="3.20 A"/>
    <property type="chains" value="A/B/C=1-430"/>
</dbReference>
<dbReference type="PDBsum" id="4W2O"/>
<dbReference type="PDBsum" id="4W2Q"/>
<dbReference type="PDBsum" id="5T3W"/>
<dbReference type="PDBsum" id="6APP"/>
<dbReference type="PDBsum" id="9FVD"/>
<dbReference type="EMDB" id="EMD-3875"/>
<dbReference type="EMDB" id="EMD-50803"/>
<dbReference type="EMDB" id="EMD-50804"/>
<dbReference type="SMR" id="P27588"/>
<dbReference type="ELM" id="P27588"/>
<dbReference type="IntAct" id="P27588">
    <property type="interactions" value="1"/>
</dbReference>
<dbReference type="ABCD" id="P27588">
    <property type="antibodies" value="3 sequenced antibodies"/>
</dbReference>
<dbReference type="DNASU" id="920944"/>
<dbReference type="GeneID" id="920944"/>
<dbReference type="KEGG" id="vg:920944"/>
<dbReference type="Proteomes" id="UP000007771">
    <property type="component" value="Genome"/>
</dbReference>
<dbReference type="Proteomes" id="UP000137266">
    <property type="component" value="Genome"/>
</dbReference>
<dbReference type="Proteomes" id="UP000160614">
    <property type="component" value="Genome"/>
</dbReference>
<dbReference type="Proteomes" id="UP000180448">
    <property type="component" value="Segment"/>
</dbReference>
<dbReference type="GO" id="GO:0019029">
    <property type="term" value="C:helical viral capsid"/>
    <property type="evidence" value="ECO:0007669"/>
    <property type="project" value="UniProtKB-KW"/>
</dbReference>
<dbReference type="GO" id="GO:0030430">
    <property type="term" value="C:host cell cytoplasm"/>
    <property type="evidence" value="ECO:0007669"/>
    <property type="project" value="UniProtKB-SubCell"/>
</dbReference>
<dbReference type="GO" id="GO:1990904">
    <property type="term" value="C:ribonucleoprotein complex"/>
    <property type="evidence" value="ECO:0007669"/>
    <property type="project" value="UniProtKB-KW"/>
</dbReference>
<dbReference type="GO" id="GO:0019013">
    <property type="term" value="C:viral nucleocapsid"/>
    <property type="evidence" value="ECO:0000314"/>
    <property type="project" value="CACAO"/>
</dbReference>
<dbReference type="GO" id="GO:0003723">
    <property type="term" value="F:RNA binding"/>
    <property type="evidence" value="ECO:0007669"/>
    <property type="project" value="UniProtKB-KW"/>
</dbReference>
<dbReference type="GO" id="GO:0039702">
    <property type="term" value="P:viral budding via host ESCRT complex"/>
    <property type="evidence" value="ECO:0007669"/>
    <property type="project" value="UniProtKB-KW"/>
</dbReference>
<dbReference type="GO" id="GO:0019074">
    <property type="term" value="P:viral RNA genome packaging"/>
    <property type="evidence" value="ECO:0007669"/>
    <property type="project" value="InterPro"/>
</dbReference>
<dbReference type="InterPro" id="IPR008609">
    <property type="entry name" value="Ebola_NP"/>
</dbReference>
<dbReference type="Pfam" id="PF05505">
    <property type="entry name" value="Ebola_NP"/>
    <property type="match status" value="1"/>
</dbReference>
<dbReference type="PIRSF" id="PIRSF003900">
    <property type="entry name" value="N_FiloV"/>
    <property type="match status" value="1"/>
</dbReference>
<organismHost>
    <name type="scientific">Chlorocebus aethiops</name>
    <name type="common">Green monkey</name>
    <name type="synonym">Cercopithecus aethiops</name>
    <dbReference type="NCBI Taxonomy" id="9534"/>
</organismHost>
<organismHost>
    <name type="scientific">Homo sapiens</name>
    <name type="common">Human</name>
    <dbReference type="NCBI Taxonomy" id="9606"/>
</organismHost>
<organismHost>
    <name type="scientific">Rousettus aegyptiacus</name>
    <name type="common">Egyptian fruit bat</name>
    <name type="synonym">Pteropus aegyptiacus</name>
    <dbReference type="NCBI Taxonomy" id="9407"/>
</organismHost>
<keyword id="KW-0002">3D-structure</keyword>
<keyword id="KW-0167">Capsid protein</keyword>
<keyword id="KW-0175">Coiled coil</keyword>
<keyword id="KW-1139">Helical capsid protein</keyword>
<keyword id="KW-1035">Host cytoplasm</keyword>
<keyword id="KW-0945">Host-virus interaction</keyword>
<keyword id="KW-0597">Phosphoprotein</keyword>
<keyword id="KW-1185">Reference proteome</keyword>
<keyword id="KW-0687">Ribonucleoprotein</keyword>
<keyword id="KW-0694">RNA-binding</keyword>
<keyword id="KW-1198">Viral budding</keyword>
<keyword id="KW-1187">Viral budding via the host ESCRT complexes</keyword>
<keyword id="KW-0543">Viral nucleoprotein</keyword>
<keyword id="KW-1188">Viral release from host cell</keyword>
<keyword id="KW-0946">Virion</keyword>
<protein>
    <recommendedName>
        <fullName>Nucleoprotein</fullName>
    </recommendedName>
    <alternativeName>
        <fullName>Nucleocapsid protein</fullName>
        <shortName>Protein N</shortName>
    </alternativeName>
</protein>
<proteinExistence type="evidence at protein level"/>
<gene>
    <name type="primary">NP</name>
</gene>
<comment type="function">
    <text evidence="1">Encapsidates the genome, protecting it from nucleases. The encapsidated genomic RNA is termed the nucleocapsid and serves as template for transcription and replication. During replication, encapsidation by NP is coupled to RNA synthesis and all replicative products are resistant to nucleases (By similarity).</text>
</comment>
<comment type="subunit">
    <text evidence="6 7">Homooligomer. Homomultimerizes to form the nucleocapsid. Binds to viral genomic RNA. Interacts with VP35 and VP30 to form the nucleocapsid. Also interacts with VP24 and VP40 (Probable).</text>
</comment>
<comment type="subcellular location">
    <subcellularLocation>
        <location>Virion</location>
    </subcellularLocation>
    <subcellularLocation>
        <location evidence="1">Host cytoplasm</location>
    </subcellularLocation>
</comment>
<comment type="domain">
    <text evidence="1">This protein can be divided into a hydrophobic N-terminal half, and a hydrophilic and highly acidic C-terminal half.</text>
</comment>
<comment type="domain">
    <text>The coiled coil region is critical for homooligomerization, for the interaction with VP35 and for NP function in RNA synthesis.</text>
</comment>
<comment type="domain">
    <text>Late-budding domains (L domains) are short sequence motifs essential for viral particle budding. They recruit proteins of the host ESCRT machinery (Endosomal Sorting Complex Required for Transport) or ESCRT-associated proteins. Nucleoprotein contains one L domain: a PTAP/PSAP motif, which interacts with the UEV domain of TSG101.</text>
</comment>
<comment type="PTM">
    <text evidence="4">Phosphorylated.</text>
</comment>
<comment type="similarity">
    <text evidence="5">Belongs to the filoviruses nucleoprotein family.</text>
</comment>
<comment type="sequence caution" evidence="5">
    <conflict type="frameshift">
        <sequence resource="EMBL-CDS" id="CAA78114"/>
    </conflict>
</comment>
<organism>
    <name type="scientific">Lake Victoria marburgvirus (strain Musoke-80)</name>
    <name type="common">MARV</name>
    <name type="synonym">Marburg virus (strain Kenya/Musoke/1980)</name>
    <dbReference type="NCBI Taxonomy" id="33727"/>
    <lineage>
        <taxon>Viruses</taxon>
        <taxon>Riboviria</taxon>
        <taxon>Orthornavirae</taxon>
        <taxon>Negarnaviricota</taxon>
        <taxon>Haploviricotina</taxon>
        <taxon>Monjiviricetes</taxon>
        <taxon>Mononegavirales</taxon>
        <taxon>Filoviridae</taxon>
        <taxon>Orthomarburgvirus</taxon>
        <taxon>Orthomarburgvirus marburgense</taxon>
    </lineage>
</organism>
<sequence>MDLHSLLELGTKPTAPHVRNKKVILFDTNHQVSICNQIIDAINSGIDLGDLLEGGLLTLCVEHYYNSDKDKFNTSPVAKYLRDAGYEFDVIKNADATRFLDVSPNEPHYSPLILALKTLESTESQRGRIGLFLSFCSLFLPKLVVGDRASIEKALRQVTVHQEQGIVTYPNHWLTTGHMKVIFGILRSSFILKFVLIHQGVNLVTGHDAYDSIISNSVGQTRFSGLLIVKTVLEFILQKTDSGVTLHPLVRTSKVKNEVASFKQALSNLARHGEYAPFARVLNLSGINNLEHGLYPQLSAIALGVATAHGSTLAGVNVGEQYQQLREAAHDAEVKLQRRHEHQEIQAIAEDDEERKILEQFHLQKTEITHSQTLAVLSQKREKLARLAAEIENNIVEDQGFKQSQNRVSQSFLNDPTPVEVTVQARPMNRPTALPPPVDDKIEHESTEDSSSSSSFVDLNDPFALLNEDEDTLDDSVMIPGTTSREFQGIPEPPRQSQDLNNSQGKQEDESTNRIKKQFLRYQELPPVQEDDESEYTTDSQESIDQPGSDNEQGVDLPPPPLYAQEKRQDPIQHPAANPQDPFGSIGDVNGDILEPIRSPSSPSAPQEDTRMREAYELSPDFTNDEDNQQNWPQRVVTKKGRTFLYPNDLLQTNPPESLITALVEEYQNPVSAKELQADWPDMSFDERRHVAMNL</sequence>
<evidence type="ECO:0000250" key="1"/>
<evidence type="ECO:0000255" key="2"/>
<evidence type="ECO:0000256" key="3">
    <source>
        <dbReference type="SAM" id="MobiDB-lite"/>
    </source>
</evidence>
<evidence type="ECO:0000269" key="4">
    <source>
    </source>
</evidence>
<evidence type="ECO:0000305" key="5"/>
<evidence type="ECO:0000305" key="6">
    <source>
    </source>
</evidence>
<evidence type="ECO:0000305" key="7">
    <source>
    </source>
</evidence>
<evidence type="ECO:0007829" key="8">
    <source>
        <dbReference type="PDB" id="6APP"/>
    </source>
</evidence>
<evidence type="ECO:0007829" key="9">
    <source>
        <dbReference type="PDB" id="9FVD"/>
    </source>
</evidence>